<gene>
    <name type="primary">repc</name>
    <name type="synonym">c</name>
</gene>
<feature type="chain" id="PRO_0000077588" description="Repressor c protein">
    <location>
        <begin position="1"/>
        <end position="174"/>
    </location>
</feature>
<feature type="domain" description="HTH Mu-type" evidence="2">
    <location>
        <begin position="6"/>
        <end position="73"/>
    </location>
</feature>
<feature type="region of interest" description="Recognition by host ClpX-ClpP" evidence="1">
    <location>
        <begin position="170"/>
        <end position="174"/>
    </location>
</feature>
<feature type="sequence conflict" description="In Ref. 2; ACV50260." evidence="3" ref="2">
    <original>Y</original>
    <variation>N</variation>
    <location>
        <position position="50"/>
    </location>
</feature>
<organismHost>
    <name type="scientific">Escherichia coli</name>
    <dbReference type="NCBI Taxonomy" id="562"/>
</organismHost>
<protein>
    <recommendedName>
        <fullName>Repressor c protein</fullName>
        <shortName>Repc</shortName>
    </recommendedName>
    <alternativeName>
        <fullName>CI</fullName>
    </alternativeName>
</protein>
<organism>
    <name type="scientific">Escherichia phage D108</name>
    <name type="common">Bacteriophage D108</name>
    <dbReference type="NCBI Taxonomy" id="665033"/>
    <lineage>
        <taxon>Viruses</taxon>
        <taxon>Duplodnaviria</taxon>
        <taxon>Heunggongvirae</taxon>
        <taxon>Uroviricota</taxon>
        <taxon>Caudoviricetes</taxon>
        <taxon>Muvirus</taxon>
        <taxon>Muvirus mu</taxon>
    </lineage>
</organism>
<dbReference type="EMBL" id="X03847">
    <property type="protein sequence ID" value="CAA27474.1"/>
    <property type="molecule type" value="Genomic_DNA"/>
</dbReference>
<dbReference type="EMBL" id="GQ357916">
    <property type="protein sequence ID" value="ACV50260.1"/>
    <property type="molecule type" value="Genomic_DNA"/>
</dbReference>
<dbReference type="PIR" id="S07370">
    <property type="entry name" value="S07370"/>
</dbReference>
<dbReference type="RefSeq" id="YP_003335749.1">
    <property type="nucleotide sequence ID" value="NC_013594.1"/>
</dbReference>
<dbReference type="SMR" id="P07040"/>
<dbReference type="GeneID" id="8658869"/>
<dbReference type="KEGG" id="vg:8658869"/>
<dbReference type="OrthoDB" id="636at10239"/>
<dbReference type="Proteomes" id="UP000000320">
    <property type="component" value="Genome"/>
</dbReference>
<dbReference type="GO" id="GO:0030430">
    <property type="term" value="C:host cell cytoplasm"/>
    <property type="evidence" value="ECO:0007669"/>
    <property type="project" value="UniProtKB-SubCell"/>
</dbReference>
<dbReference type="GO" id="GO:0003677">
    <property type="term" value="F:DNA binding"/>
    <property type="evidence" value="ECO:0007669"/>
    <property type="project" value="UniProtKB-KW"/>
</dbReference>
<dbReference type="GO" id="GO:0098689">
    <property type="term" value="P:latency-replication decision"/>
    <property type="evidence" value="ECO:0007669"/>
    <property type="project" value="UniProtKB-KW"/>
</dbReference>
<dbReference type="Gene3D" id="1.10.10.10">
    <property type="entry name" value="Winged helix-like DNA-binding domain superfamily/Winged helix DNA-binding domain"/>
    <property type="match status" value="1"/>
</dbReference>
<dbReference type="InterPro" id="IPR009061">
    <property type="entry name" value="DNA-bd_dom_put_sf"/>
</dbReference>
<dbReference type="InterPro" id="IPR003314">
    <property type="entry name" value="Mu-type_HTH"/>
</dbReference>
<dbReference type="InterPro" id="IPR036388">
    <property type="entry name" value="WH-like_DNA-bd_sf"/>
</dbReference>
<dbReference type="Pfam" id="PF02316">
    <property type="entry name" value="HTH_Tnp_Mu_1"/>
    <property type="match status" value="1"/>
</dbReference>
<dbReference type="SUPFAM" id="SSF46955">
    <property type="entry name" value="Putative DNA-binding domain"/>
    <property type="match status" value="1"/>
</dbReference>
<dbReference type="PROSITE" id="PS51702">
    <property type="entry name" value="HTH_MU"/>
    <property type="match status" value="1"/>
</dbReference>
<accession>P07040</accession>
<accession>C9DGK9</accession>
<keyword id="KW-0238">DNA-binding</keyword>
<keyword id="KW-0244">Early protein</keyword>
<keyword id="KW-1035">Host cytoplasm</keyword>
<keyword id="KW-0945">Host-virus interaction</keyword>
<keyword id="KW-1252">Latency-replication decision</keyword>
<keyword id="KW-0678">Repressor</keyword>
<keyword id="KW-0804">Transcription</keyword>
<keyword id="KW-0805">Transcription regulation</keyword>
<proteinExistence type="evidence at transcript level"/>
<comment type="function">
    <text evidence="1">Promotes latency by binding operators O1 and O2 in the enhancer/operator region, thereby repressing the transcription from the Pe (early) promoter and blocking the expression of the genes required for replication (lytic growth). Competes with DDE-recombinase A for binding to the internal activation sequence (IAS), which overlaps O1 and O2. The outcome of this competition determines if the virus enters latency or starts replication. Makes the cell immune to superinfection by repressing genes expression of any subsequent incoming viral genome (By similarity).</text>
</comment>
<comment type="subunit">
    <text evidence="1">Homodimer. Three homodimers assemble as a homohexamer (By similarity).</text>
</comment>
<comment type="subcellular location">
    <subcellularLocation>
        <location evidence="1">Host cytoplasm</location>
    </subcellularLocation>
</comment>
<comment type="induction">
    <text>Expressed in the early phase of the viral replicative cycle. When present at high concentration, negatively regulates its own expression by binding to O3 (PcM promoter). PcM promoter, and thus Repc expression, is blocked by Ner. The host SsrA, the ClpXP host protease that degrades Repc, the Lon protease, and the stationary phase-specific sigma factor RpoS are all influencing viral repression in response to either temperature or stationary growth phase. Decreased availability of host SsrA in growing cells would favor latency, whereas starvation would favor Repc degradation and hence induction.</text>
</comment>
<comment type="domain">
    <text>The winged HTH N-terminal domain cooperatively binds to the enhancer/operator region of the Pe promoter. The C-terminal domain (CTD) regulates DNA binding by the N-terminal domain and degradation by ClpX-ClpP protease.</text>
</comment>
<comment type="similarity">
    <text evidence="3">Belongs to the mulikevirus repressor c protein family.</text>
</comment>
<name>REPC_BPD10</name>
<reference key="1">
    <citation type="journal article" date="1986" name="Nucleic Acids Res.">
        <title>DNA sequence of the control region of phage D108: the N-terminal amino acid sequences of repressor and transposase are similar both in phage D108 and in its relative, phage Mu.</title>
        <authorList>
            <person name="Mizuuchi M."/>
            <person name="Weisberg R.A."/>
            <person name="Mizuuchi K."/>
        </authorList>
    </citation>
    <scope>NUCLEOTIDE SEQUENCE [GENOMIC DNA]</scope>
</reference>
<reference key="2">
    <citation type="submission" date="2009-07" db="EMBL/GenBank/DDBJ databases">
        <authorList>
            <person name="Kropinski A.M."/>
            <person name="Villegas A."/>
            <person name="Lingohr E.J."/>
        </authorList>
    </citation>
    <scope>NUCLEOTIDE SEQUENCE [GENOMIC DNA]</scope>
</reference>
<sequence>MMSFEIKEWFNAKELEGMPGVPKLATNITRKAVAEDWVKRQRHGGKGVAYEYHINSLPEETRRAIKGASLSDKPVHTSIVHTVDERLIYAMSFLTPDEQAAAVEIIRVAGIKGLMPTIVSKDKALEALGITVEQQKTLQTLQALPPEKVREILSQYEGKEHNFPVRENDVKKAV</sequence>
<evidence type="ECO:0000250" key="1"/>
<evidence type="ECO:0000255" key="2">
    <source>
        <dbReference type="PROSITE-ProRule" id="PRU01039"/>
    </source>
</evidence>
<evidence type="ECO:0000305" key="3"/>